<organism>
    <name type="scientific">Bradyrhizobium sp. (strain ORS 278)</name>
    <dbReference type="NCBI Taxonomy" id="114615"/>
    <lineage>
        <taxon>Bacteria</taxon>
        <taxon>Pseudomonadati</taxon>
        <taxon>Pseudomonadota</taxon>
        <taxon>Alphaproteobacteria</taxon>
        <taxon>Hyphomicrobiales</taxon>
        <taxon>Nitrobacteraceae</taxon>
        <taxon>Bradyrhizobium</taxon>
    </lineage>
</organism>
<dbReference type="EMBL" id="CU234118">
    <property type="protein sequence ID" value="CAL78201.1"/>
    <property type="molecule type" value="Genomic_DNA"/>
</dbReference>
<dbReference type="RefSeq" id="WP_011927315.1">
    <property type="nucleotide sequence ID" value="NC_009445.1"/>
</dbReference>
<dbReference type="SMR" id="A4YWC5"/>
<dbReference type="STRING" id="114615.BRADO4460"/>
<dbReference type="KEGG" id="bra:BRADO4460"/>
<dbReference type="eggNOG" id="COG1381">
    <property type="taxonomic scope" value="Bacteria"/>
</dbReference>
<dbReference type="HOGENOM" id="CLU_086029_0_0_5"/>
<dbReference type="OrthoDB" id="9804792at2"/>
<dbReference type="Proteomes" id="UP000001994">
    <property type="component" value="Chromosome"/>
</dbReference>
<dbReference type="GO" id="GO:0043590">
    <property type="term" value="C:bacterial nucleoid"/>
    <property type="evidence" value="ECO:0007669"/>
    <property type="project" value="TreeGrafter"/>
</dbReference>
<dbReference type="GO" id="GO:0006310">
    <property type="term" value="P:DNA recombination"/>
    <property type="evidence" value="ECO:0007669"/>
    <property type="project" value="UniProtKB-UniRule"/>
</dbReference>
<dbReference type="GO" id="GO:0006302">
    <property type="term" value="P:double-strand break repair"/>
    <property type="evidence" value="ECO:0007669"/>
    <property type="project" value="TreeGrafter"/>
</dbReference>
<dbReference type="Gene3D" id="2.40.50.140">
    <property type="entry name" value="Nucleic acid-binding proteins"/>
    <property type="match status" value="1"/>
</dbReference>
<dbReference type="Gene3D" id="1.20.1440.120">
    <property type="entry name" value="Recombination protein O, C-terminal domain"/>
    <property type="match status" value="1"/>
</dbReference>
<dbReference type="HAMAP" id="MF_00201">
    <property type="entry name" value="RecO"/>
    <property type="match status" value="1"/>
</dbReference>
<dbReference type="InterPro" id="IPR037278">
    <property type="entry name" value="ARFGAP/RecO"/>
</dbReference>
<dbReference type="InterPro" id="IPR022572">
    <property type="entry name" value="DNA_rep/recomb_RecO_N"/>
</dbReference>
<dbReference type="InterPro" id="IPR012340">
    <property type="entry name" value="NA-bd_OB-fold"/>
</dbReference>
<dbReference type="InterPro" id="IPR003717">
    <property type="entry name" value="RecO"/>
</dbReference>
<dbReference type="InterPro" id="IPR042242">
    <property type="entry name" value="RecO_C"/>
</dbReference>
<dbReference type="NCBIfam" id="TIGR00613">
    <property type="entry name" value="reco"/>
    <property type="match status" value="1"/>
</dbReference>
<dbReference type="PANTHER" id="PTHR33991">
    <property type="entry name" value="DNA REPAIR PROTEIN RECO"/>
    <property type="match status" value="1"/>
</dbReference>
<dbReference type="PANTHER" id="PTHR33991:SF1">
    <property type="entry name" value="DNA REPAIR PROTEIN RECO"/>
    <property type="match status" value="1"/>
</dbReference>
<dbReference type="Pfam" id="PF02565">
    <property type="entry name" value="RecO_C"/>
    <property type="match status" value="1"/>
</dbReference>
<dbReference type="Pfam" id="PF11967">
    <property type="entry name" value="RecO_N"/>
    <property type="match status" value="1"/>
</dbReference>
<dbReference type="SUPFAM" id="SSF57863">
    <property type="entry name" value="ArfGap/RecO-like zinc finger"/>
    <property type="match status" value="1"/>
</dbReference>
<dbReference type="SUPFAM" id="SSF50249">
    <property type="entry name" value="Nucleic acid-binding proteins"/>
    <property type="match status" value="1"/>
</dbReference>
<accession>A4YWC5</accession>
<evidence type="ECO:0000255" key="1">
    <source>
        <dbReference type="HAMAP-Rule" id="MF_00201"/>
    </source>
</evidence>
<comment type="function">
    <text evidence="1">Involved in DNA repair and RecF pathway recombination.</text>
</comment>
<comment type="similarity">
    <text evidence="1">Belongs to the RecO family.</text>
</comment>
<sequence>MEWTDDGIVLGLRRHGESSAVVELLTREHGRHLGLVRGAAGKRMRPVLQPGNTVRAIWRARLDEHLGMYAVDGLTLRAAELMSASHGAYGVTHLASLARLLPERDPHEDMYFRLEHALDDFADAGAAAAHIVRFELAILTELGFGLDLESCAATGETSDLIYVSPKSGGAVSRTAGAPWADRLLPLPPFLRESDEDHGWSDQDLLDGFRLTGLFLLRHVLEPRGQGHSDAREGFINAVTRARTRLTRA</sequence>
<protein>
    <recommendedName>
        <fullName evidence="1">DNA repair protein RecO</fullName>
    </recommendedName>
    <alternativeName>
        <fullName evidence="1">Recombination protein O</fullName>
    </alternativeName>
</protein>
<keyword id="KW-0227">DNA damage</keyword>
<keyword id="KW-0233">DNA recombination</keyword>
<keyword id="KW-0234">DNA repair</keyword>
<keyword id="KW-1185">Reference proteome</keyword>
<gene>
    <name evidence="1" type="primary">recO</name>
    <name type="ordered locus">BRADO4460</name>
</gene>
<name>RECO_BRASO</name>
<reference key="1">
    <citation type="journal article" date="2007" name="Science">
        <title>Legumes symbioses: absence of nod genes in photosynthetic bradyrhizobia.</title>
        <authorList>
            <person name="Giraud E."/>
            <person name="Moulin L."/>
            <person name="Vallenet D."/>
            <person name="Barbe V."/>
            <person name="Cytryn E."/>
            <person name="Avarre J.-C."/>
            <person name="Jaubert M."/>
            <person name="Simon D."/>
            <person name="Cartieaux F."/>
            <person name="Prin Y."/>
            <person name="Bena G."/>
            <person name="Hannibal L."/>
            <person name="Fardoux J."/>
            <person name="Kojadinovic M."/>
            <person name="Vuillet L."/>
            <person name="Lajus A."/>
            <person name="Cruveiller S."/>
            <person name="Rouy Z."/>
            <person name="Mangenot S."/>
            <person name="Segurens B."/>
            <person name="Dossat C."/>
            <person name="Franck W.L."/>
            <person name="Chang W.-S."/>
            <person name="Saunders E."/>
            <person name="Bruce D."/>
            <person name="Richardson P."/>
            <person name="Normand P."/>
            <person name="Dreyfus B."/>
            <person name="Pignol D."/>
            <person name="Stacey G."/>
            <person name="Emerich D."/>
            <person name="Vermeglio A."/>
            <person name="Medigue C."/>
            <person name="Sadowsky M."/>
        </authorList>
    </citation>
    <scope>NUCLEOTIDE SEQUENCE [LARGE SCALE GENOMIC DNA]</scope>
    <source>
        <strain>ORS 278</strain>
    </source>
</reference>
<feature type="chain" id="PRO_1000012124" description="DNA repair protein RecO">
    <location>
        <begin position="1"/>
        <end position="248"/>
    </location>
</feature>
<proteinExistence type="inferred from homology"/>